<evidence type="ECO:0000255" key="1">
    <source>
        <dbReference type="HAMAP-Rule" id="MF_01318"/>
    </source>
</evidence>
<evidence type="ECO:0000305" key="2"/>
<comment type="function">
    <text evidence="1">Binds directly to 23S rRNA. The L1 stalk is quite mobile in the ribosome, and is involved in E site tRNA release.</text>
</comment>
<comment type="function">
    <text evidence="1">Protein L1 is also a translational repressor protein, it controls the translation of the L11 operon by binding to its mRNA.</text>
</comment>
<comment type="subunit">
    <text evidence="1">Part of the 50S ribosomal subunit.</text>
</comment>
<comment type="similarity">
    <text evidence="1">Belongs to the universal ribosomal protein uL1 family.</text>
</comment>
<reference key="1">
    <citation type="journal article" date="2008" name="Antimicrob. Agents Chemother.">
        <title>Mutated response regulator graR is responsible for phenotypic conversion of Staphylococcus aureus from heterogeneous vancomycin-intermediate resistance to vancomycin-intermediate resistance.</title>
        <authorList>
            <person name="Neoh H.-M."/>
            <person name="Cui L."/>
            <person name="Yuzawa H."/>
            <person name="Takeuchi F."/>
            <person name="Matsuo M."/>
            <person name="Hiramatsu K."/>
        </authorList>
    </citation>
    <scope>NUCLEOTIDE SEQUENCE [LARGE SCALE GENOMIC DNA]</scope>
    <source>
        <strain>Mu3 / ATCC 700698</strain>
    </source>
</reference>
<dbReference type="EMBL" id="AP009324">
    <property type="protein sequence ID" value="BAF77419.1"/>
    <property type="molecule type" value="Genomic_DNA"/>
</dbReference>
<dbReference type="RefSeq" id="WP_001074619.1">
    <property type="nucleotide sequence ID" value="NZ_CTYB01000013.1"/>
</dbReference>
<dbReference type="SMR" id="A7WYW1"/>
<dbReference type="GeneID" id="98344872"/>
<dbReference type="KEGG" id="saw:SAHV_0536"/>
<dbReference type="HOGENOM" id="CLU_062853_0_0_9"/>
<dbReference type="GO" id="GO:0015934">
    <property type="term" value="C:large ribosomal subunit"/>
    <property type="evidence" value="ECO:0007669"/>
    <property type="project" value="InterPro"/>
</dbReference>
<dbReference type="GO" id="GO:0019843">
    <property type="term" value="F:rRNA binding"/>
    <property type="evidence" value="ECO:0007669"/>
    <property type="project" value="UniProtKB-UniRule"/>
</dbReference>
<dbReference type="GO" id="GO:0003735">
    <property type="term" value="F:structural constituent of ribosome"/>
    <property type="evidence" value="ECO:0007669"/>
    <property type="project" value="InterPro"/>
</dbReference>
<dbReference type="GO" id="GO:0000049">
    <property type="term" value="F:tRNA binding"/>
    <property type="evidence" value="ECO:0007669"/>
    <property type="project" value="UniProtKB-KW"/>
</dbReference>
<dbReference type="GO" id="GO:0006417">
    <property type="term" value="P:regulation of translation"/>
    <property type="evidence" value="ECO:0007669"/>
    <property type="project" value="UniProtKB-KW"/>
</dbReference>
<dbReference type="GO" id="GO:0006412">
    <property type="term" value="P:translation"/>
    <property type="evidence" value="ECO:0007669"/>
    <property type="project" value="UniProtKB-UniRule"/>
</dbReference>
<dbReference type="CDD" id="cd00403">
    <property type="entry name" value="Ribosomal_L1"/>
    <property type="match status" value="1"/>
</dbReference>
<dbReference type="FunFam" id="3.40.50.790:FF:000001">
    <property type="entry name" value="50S ribosomal protein L1"/>
    <property type="match status" value="1"/>
</dbReference>
<dbReference type="Gene3D" id="3.30.190.20">
    <property type="match status" value="1"/>
</dbReference>
<dbReference type="Gene3D" id="3.40.50.790">
    <property type="match status" value="1"/>
</dbReference>
<dbReference type="HAMAP" id="MF_01318_B">
    <property type="entry name" value="Ribosomal_uL1_B"/>
    <property type="match status" value="1"/>
</dbReference>
<dbReference type="InterPro" id="IPR005878">
    <property type="entry name" value="Ribosom_uL1_bac-type"/>
</dbReference>
<dbReference type="InterPro" id="IPR002143">
    <property type="entry name" value="Ribosomal_uL1"/>
</dbReference>
<dbReference type="InterPro" id="IPR023674">
    <property type="entry name" value="Ribosomal_uL1-like"/>
</dbReference>
<dbReference type="InterPro" id="IPR028364">
    <property type="entry name" value="Ribosomal_uL1/biogenesis"/>
</dbReference>
<dbReference type="InterPro" id="IPR016095">
    <property type="entry name" value="Ribosomal_uL1_3-a/b-sand"/>
</dbReference>
<dbReference type="InterPro" id="IPR023673">
    <property type="entry name" value="Ribosomal_uL1_CS"/>
</dbReference>
<dbReference type="NCBIfam" id="TIGR01169">
    <property type="entry name" value="rplA_bact"/>
    <property type="match status" value="1"/>
</dbReference>
<dbReference type="PANTHER" id="PTHR36427">
    <property type="entry name" value="54S RIBOSOMAL PROTEIN L1, MITOCHONDRIAL"/>
    <property type="match status" value="1"/>
</dbReference>
<dbReference type="PANTHER" id="PTHR36427:SF3">
    <property type="entry name" value="LARGE RIBOSOMAL SUBUNIT PROTEIN UL1M"/>
    <property type="match status" value="1"/>
</dbReference>
<dbReference type="Pfam" id="PF00687">
    <property type="entry name" value="Ribosomal_L1"/>
    <property type="match status" value="1"/>
</dbReference>
<dbReference type="PIRSF" id="PIRSF002155">
    <property type="entry name" value="Ribosomal_L1"/>
    <property type="match status" value="1"/>
</dbReference>
<dbReference type="SUPFAM" id="SSF56808">
    <property type="entry name" value="Ribosomal protein L1"/>
    <property type="match status" value="1"/>
</dbReference>
<dbReference type="PROSITE" id="PS01199">
    <property type="entry name" value="RIBOSOMAL_L1"/>
    <property type="match status" value="1"/>
</dbReference>
<proteinExistence type="inferred from homology"/>
<organism>
    <name type="scientific">Staphylococcus aureus (strain Mu3 / ATCC 700698)</name>
    <dbReference type="NCBI Taxonomy" id="418127"/>
    <lineage>
        <taxon>Bacteria</taxon>
        <taxon>Bacillati</taxon>
        <taxon>Bacillota</taxon>
        <taxon>Bacilli</taxon>
        <taxon>Bacillales</taxon>
        <taxon>Staphylococcaceae</taxon>
        <taxon>Staphylococcus</taxon>
    </lineage>
</organism>
<keyword id="KW-0678">Repressor</keyword>
<keyword id="KW-0687">Ribonucleoprotein</keyword>
<keyword id="KW-0689">Ribosomal protein</keyword>
<keyword id="KW-0694">RNA-binding</keyword>
<keyword id="KW-0699">rRNA-binding</keyword>
<keyword id="KW-0810">Translation regulation</keyword>
<keyword id="KW-0820">tRNA-binding</keyword>
<accession>A7WYW1</accession>
<name>RL1_STAA1</name>
<sequence>MAKKGKKYQEAASKVDRTQHYSVEEAIKLAKETSIANFDASVEVAFRLGIDTRKNDQQIRGAVVLPNGTGKSQSVLVFAKGDKIAEAEAAGADYVGEAEYVQKIQQGWFDFDVVVATPDMMGEVGKLGRVLGPKGLMPNPKTGTVTMDVKKAVEEIKAGKVEYRAEKAGIVHASIGKVSFTDEQLIENFNTLQDVLAKAKPSSAKGTYFKSVAVTTTMGPGVKIDTASFK</sequence>
<feature type="chain" id="PRO_1000051925" description="Large ribosomal subunit protein uL1">
    <location>
        <begin position="1"/>
        <end position="230"/>
    </location>
</feature>
<gene>
    <name evidence="1" type="primary">rplA</name>
    <name type="ordered locus">SAHV_0536</name>
</gene>
<protein>
    <recommendedName>
        <fullName evidence="1">Large ribosomal subunit protein uL1</fullName>
    </recommendedName>
    <alternativeName>
        <fullName evidence="2">50S ribosomal protein L1</fullName>
    </alternativeName>
</protein>